<sequence length="175" mass="18278">MSRVAKKPVSLPKGVELNVQPGLVSVKGPKGTLTLPKPAGVEIAIDGGVATLSANDPSQIALTGTVRAILANMVKGVSEGFERKLELVGVGYRAAMQGKDLSLALGFSHPLVFVAPEGITLSTPTQTEIVVQGADKQRVGEVAAKIRGFRPPEPYKGKGVKYAGEVIIRKEAKKA</sequence>
<comment type="function">
    <text evidence="1">This protein binds to the 23S rRNA, and is important in its secondary structure. It is located near the subunit interface in the base of the L7/L12 stalk, and near the tRNA binding site of the peptidyltransferase center.</text>
</comment>
<comment type="subunit">
    <text evidence="1">Part of the 50S ribosomal subunit.</text>
</comment>
<comment type="similarity">
    <text evidence="1">Belongs to the universal ribosomal protein uL6 family.</text>
</comment>
<gene>
    <name evidence="1" type="primary">rplF</name>
    <name type="ordered locus">XAC0987</name>
</gene>
<reference key="1">
    <citation type="journal article" date="2002" name="Nature">
        <title>Comparison of the genomes of two Xanthomonas pathogens with differing host specificities.</title>
        <authorList>
            <person name="da Silva A.C.R."/>
            <person name="Ferro J.A."/>
            <person name="Reinach F.C."/>
            <person name="Farah C.S."/>
            <person name="Furlan L.R."/>
            <person name="Quaggio R.B."/>
            <person name="Monteiro-Vitorello C.B."/>
            <person name="Van Sluys M.A."/>
            <person name="Almeida N.F. Jr."/>
            <person name="Alves L.M.C."/>
            <person name="do Amaral A.M."/>
            <person name="Bertolini M.C."/>
            <person name="Camargo L.E.A."/>
            <person name="Camarotte G."/>
            <person name="Cannavan F."/>
            <person name="Cardozo J."/>
            <person name="Chambergo F."/>
            <person name="Ciapina L.P."/>
            <person name="Cicarelli R.M.B."/>
            <person name="Coutinho L.L."/>
            <person name="Cursino-Santos J.R."/>
            <person name="El-Dorry H."/>
            <person name="Faria J.B."/>
            <person name="Ferreira A.J.S."/>
            <person name="Ferreira R.C.C."/>
            <person name="Ferro M.I.T."/>
            <person name="Formighieri E.F."/>
            <person name="Franco M.C."/>
            <person name="Greggio C.C."/>
            <person name="Gruber A."/>
            <person name="Katsuyama A.M."/>
            <person name="Kishi L.T."/>
            <person name="Leite R.P."/>
            <person name="Lemos E.G.M."/>
            <person name="Lemos M.V.F."/>
            <person name="Locali E.C."/>
            <person name="Machado M.A."/>
            <person name="Madeira A.M.B.N."/>
            <person name="Martinez-Rossi N.M."/>
            <person name="Martins E.C."/>
            <person name="Meidanis J."/>
            <person name="Menck C.F.M."/>
            <person name="Miyaki C.Y."/>
            <person name="Moon D.H."/>
            <person name="Moreira L.M."/>
            <person name="Novo M.T.M."/>
            <person name="Okura V.K."/>
            <person name="Oliveira M.C."/>
            <person name="Oliveira V.R."/>
            <person name="Pereira H.A."/>
            <person name="Rossi A."/>
            <person name="Sena J.A.D."/>
            <person name="Silva C."/>
            <person name="de Souza R.F."/>
            <person name="Spinola L.A.F."/>
            <person name="Takita M.A."/>
            <person name="Tamura R.E."/>
            <person name="Teixeira E.C."/>
            <person name="Tezza R.I.D."/>
            <person name="Trindade dos Santos M."/>
            <person name="Truffi D."/>
            <person name="Tsai S.M."/>
            <person name="White F.F."/>
            <person name="Setubal J.C."/>
            <person name="Kitajima J.P."/>
        </authorList>
    </citation>
    <scope>NUCLEOTIDE SEQUENCE [LARGE SCALE GENOMIC DNA]</scope>
    <source>
        <strain>306</strain>
    </source>
</reference>
<feature type="chain" id="PRO_0000260974" description="Large ribosomal subunit protein uL6">
    <location>
        <begin position="1"/>
        <end position="175"/>
    </location>
</feature>
<keyword id="KW-0687">Ribonucleoprotein</keyword>
<keyword id="KW-0689">Ribosomal protein</keyword>
<keyword id="KW-0694">RNA-binding</keyword>
<keyword id="KW-0699">rRNA-binding</keyword>
<evidence type="ECO:0000255" key="1">
    <source>
        <dbReference type="HAMAP-Rule" id="MF_01365"/>
    </source>
</evidence>
<evidence type="ECO:0000305" key="2"/>
<name>RL6_XANAC</name>
<accession>Q8PNR2</accession>
<dbReference type="EMBL" id="AE008923">
    <property type="protein sequence ID" value="AAM35870.1"/>
    <property type="molecule type" value="Genomic_DNA"/>
</dbReference>
<dbReference type="RefSeq" id="WP_011050640.1">
    <property type="nucleotide sequence ID" value="NC_003919.1"/>
</dbReference>
<dbReference type="SMR" id="Q8PNR2"/>
<dbReference type="GeneID" id="66910173"/>
<dbReference type="KEGG" id="xac:XAC0987"/>
<dbReference type="eggNOG" id="COG0097">
    <property type="taxonomic scope" value="Bacteria"/>
</dbReference>
<dbReference type="HOGENOM" id="CLU_065464_1_2_6"/>
<dbReference type="Proteomes" id="UP000000576">
    <property type="component" value="Chromosome"/>
</dbReference>
<dbReference type="GO" id="GO:0022625">
    <property type="term" value="C:cytosolic large ribosomal subunit"/>
    <property type="evidence" value="ECO:0007669"/>
    <property type="project" value="TreeGrafter"/>
</dbReference>
<dbReference type="GO" id="GO:0019843">
    <property type="term" value="F:rRNA binding"/>
    <property type="evidence" value="ECO:0007669"/>
    <property type="project" value="UniProtKB-UniRule"/>
</dbReference>
<dbReference type="GO" id="GO:0003735">
    <property type="term" value="F:structural constituent of ribosome"/>
    <property type="evidence" value="ECO:0007669"/>
    <property type="project" value="InterPro"/>
</dbReference>
<dbReference type="GO" id="GO:0002181">
    <property type="term" value="P:cytoplasmic translation"/>
    <property type="evidence" value="ECO:0007669"/>
    <property type="project" value="TreeGrafter"/>
</dbReference>
<dbReference type="FunFam" id="3.90.930.12:FF:000001">
    <property type="entry name" value="50S ribosomal protein L6"/>
    <property type="match status" value="1"/>
</dbReference>
<dbReference type="Gene3D" id="3.90.930.12">
    <property type="entry name" value="Ribosomal protein L6, alpha-beta domain"/>
    <property type="match status" value="2"/>
</dbReference>
<dbReference type="HAMAP" id="MF_01365_B">
    <property type="entry name" value="Ribosomal_uL6_B"/>
    <property type="match status" value="1"/>
</dbReference>
<dbReference type="InterPro" id="IPR000702">
    <property type="entry name" value="Ribosomal_uL6-like"/>
</dbReference>
<dbReference type="InterPro" id="IPR036789">
    <property type="entry name" value="Ribosomal_uL6-like_a/b-dom_sf"/>
</dbReference>
<dbReference type="InterPro" id="IPR020040">
    <property type="entry name" value="Ribosomal_uL6_a/b-dom"/>
</dbReference>
<dbReference type="InterPro" id="IPR019906">
    <property type="entry name" value="Ribosomal_uL6_bac-type"/>
</dbReference>
<dbReference type="InterPro" id="IPR002358">
    <property type="entry name" value="Ribosomal_uL6_CS"/>
</dbReference>
<dbReference type="NCBIfam" id="TIGR03654">
    <property type="entry name" value="L6_bact"/>
    <property type="match status" value="1"/>
</dbReference>
<dbReference type="PANTHER" id="PTHR11655">
    <property type="entry name" value="60S/50S RIBOSOMAL PROTEIN L6/L9"/>
    <property type="match status" value="1"/>
</dbReference>
<dbReference type="PANTHER" id="PTHR11655:SF14">
    <property type="entry name" value="LARGE RIBOSOMAL SUBUNIT PROTEIN UL6M"/>
    <property type="match status" value="1"/>
</dbReference>
<dbReference type="Pfam" id="PF00347">
    <property type="entry name" value="Ribosomal_L6"/>
    <property type="match status" value="2"/>
</dbReference>
<dbReference type="PIRSF" id="PIRSF002162">
    <property type="entry name" value="Ribosomal_L6"/>
    <property type="match status" value="1"/>
</dbReference>
<dbReference type="PRINTS" id="PR00059">
    <property type="entry name" value="RIBOSOMALL6"/>
</dbReference>
<dbReference type="SUPFAM" id="SSF56053">
    <property type="entry name" value="Ribosomal protein L6"/>
    <property type="match status" value="2"/>
</dbReference>
<dbReference type="PROSITE" id="PS00525">
    <property type="entry name" value="RIBOSOMAL_L6_1"/>
    <property type="match status" value="1"/>
</dbReference>
<organism>
    <name type="scientific">Xanthomonas axonopodis pv. citri (strain 306)</name>
    <dbReference type="NCBI Taxonomy" id="190486"/>
    <lineage>
        <taxon>Bacteria</taxon>
        <taxon>Pseudomonadati</taxon>
        <taxon>Pseudomonadota</taxon>
        <taxon>Gammaproteobacteria</taxon>
        <taxon>Lysobacterales</taxon>
        <taxon>Lysobacteraceae</taxon>
        <taxon>Xanthomonas</taxon>
    </lineage>
</organism>
<proteinExistence type="inferred from homology"/>
<protein>
    <recommendedName>
        <fullName evidence="1">Large ribosomal subunit protein uL6</fullName>
    </recommendedName>
    <alternativeName>
        <fullName evidence="2">50S ribosomal protein L6</fullName>
    </alternativeName>
</protein>